<dbReference type="EC" id="2.5.1.-" evidence="2"/>
<dbReference type="EC" id="2.5.1.1" evidence="2"/>
<dbReference type="EC" id="2.5.1.29" evidence="2"/>
<dbReference type="EC" id="2.5.1.10" evidence="2"/>
<dbReference type="EMBL" id="MG764076">
    <property type="protein sequence ID" value="AVA16671.1"/>
    <property type="molecule type" value="mRNA"/>
</dbReference>
<dbReference type="SMR" id="A0A2L0VXR5"/>
<dbReference type="UniPathway" id="UPA00213"/>
<dbReference type="GO" id="GO:0004337">
    <property type="term" value="F:(2E,6E)-farnesyl diphosphate synthase activity"/>
    <property type="evidence" value="ECO:0007669"/>
    <property type="project" value="UniProtKB-EC"/>
</dbReference>
<dbReference type="GO" id="GO:0004161">
    <property type="term" value="F:dimethylallyltranstransferase activity"/>
    <property type="evidence" value="ECO:0007669"/>
    <property type="project" value="UniProtKB-EC"/>
</dbReference>
<dbReference type="GO" id="GO:0004311">
    <property type="term" value="F:geranylgeranyl diphosphate synthase activity"/>
    <property type="evidence" value="ECO:0007669"/>
    <property type="project" value="UniProtKB-EC"/>
</dbReference>
<dbReference type="GO" id="GO:0046872">
    <property type="term" value="F:metal ion binding"/>
    <property type="evidence" value="ECO:0007669"/>
    <property type="project" value="UniProtKB-KW"/>
</dbReference>
<dbReference type="GO" id="GO:0017000">
    <property type="term" value="P:antibiotic biosynthetic process"/>
    <property type="evidence" value="ECO:0007669"/>
    <property type="project" value="UniProtKB-KW"/>
</dbReference>
<dbReference type="GO" id="GO:0016114">
    <property type="term" value="P:terpenoid biosynthetic process"/>
    <property type="evidence" value="ECO:0007669"/>
    <property type="project" value="UniProtKB-UniPathway"/>
</dbReference>
<dbReference type="Gene3D" id="1.10.600.10">
    <property type="entry name" value="Farnesyl Diphosphate Synthase"/>
    <property type="match status" value="1"/>
</dbReference>
<dbReference type="InterPro" id="IPR008949">
    <property type="entry name" value="Isoprenoid_synthase_dom_sf"/>
</dbReference>
<dbReference type="InterPro" id="IPR000092">
    <property type="entry name" value="Polyprenyl_synt"/>
</dbReference>
<dbReference type="InterPro" id="IPR033749">
    <property type="entry name" value="Polyprenyl_synt_CS"/>
</dbReference>
<dbReference type="PANTHER" id="PTHR12001">
    <property type="entry name" value="GERANYLGERANYL PYROPHOSPHATE SYNTHASE"/>
    <property type="match status" value="1"/>
</dbReference>
<dbReference type="PANTHER" id="PTHR12001:SF44">
    <property type="entry name" value="GERANYLGERANYL PYROPHOSPHATE SYNTHASE"/>
    <property type="match status" value="1"/>
</dbReference>
<dbReference type="Pfam" id="PF00348">
    <property type="entry name" value="polyprenyl_synt"/>
    <property type="match status" value="1"/>
</dbReference>
<dbReference type="SFLD" id="SFLDS00005">
    <property type="entry name" value="Isoprenoid_Synthase_Type_I"/>
    <property type="match status" value="1"/>
</dbReference>
<dbReference type="SUPFAM" id="SSF48576">
    <property type="entry name" value="Terpenoid synthases"/>
    <property type="match status" value="1"/>
</dbReference>
<dbReference type="PROSITE" id="PS00723">
    <property type="entry name" value="POLYPRENYL_SYNTHASE_1"/>
    <property type="match status" value="1"/>
</dbReference>
<dbReference type="PROSITE" id="PS00444">
    <property type="entry name" value="POLYPRENYL_SYNTHASE_2"/>
    <property type="match status" value="1"/>
</dbReference>
<accession>A0A2L0VXR5</accession>
<proteinExistence type="evidence at transcript level"/>
<gene>
    <name evidence="5" type="primary">GGPS</name>
    <name evidence="5" type="synonym">ggs</name>
</gene>
<reference key="1">
    <citation type="journal article" date="2016" name="Sci. Rep.">
        <title>Identification and manipulation of the pleuromutilin gene cluster from Clitopilus passeckerianus for increased rapid antibiotic production.</title>
        <authorList>
            <person name="Bailey A.M."/>
            <person name="Alberti F."/>
            <person name="Kilaru S."/>
            <person name="Collins C.M."/>
            <person name="de Mattos-Shipley K."/>
            <person name="Hartley A.J."/>
            <person name="Hayes P."/>
            <person name="Griffin A."/>
            <person name="Lazarus C.M."/>
            <person name="Cox R.J."/>
            <person name="Willis C.L."/>
            <person name="O'Dwyer K."/>
            <person name="Spence D.W."/>
            <person name="Foster G.D."/>
        </authorList>
    </citation>
    <scope>NUCLEOTIDE SEQUENCE [GENOMIC DNA]</scope>
    <scope>IDENTIFICATION</scope>
    <scope>FUNCTION</scope>
    <scope>INDUCTION</scope>
    <scope>PATHWAY</scope>
</reference>
<reference key="2">
    <citation type="journal article" date="2018" name="Org. Lett.">
        <title>Premutilin synthase: ring rearrangement by a class II diterpene cyclase.</title>
        <authorList>
            <person name="Xu M."/>
            <person name="Jia M."/>
            <person name="Hong Y.J."/>
            <person name="Yin X."/>
            <person name="Tantillo D.J."/>
            <person name="Proteau P.J."/>
            <person name="Peters R.J."/>
        </authorList>
    </citation>
    <scope>NUCLEOTIDE SEQUENCE [MRNA]</scope>
    <scope>FUNCTION</scope>
    <scope>PATHWAY</scope>
</reference>
<comment type="function">
    <text evidence="1 3 4">Geranylgeranyl pyrophosphate synthase; part of the gene cluster that mediates the biosynthesis of pleuromutilin, a tricyclic diterpene showing antibacterial properties (PubMed:27143514, PubMed:29388775). The geranylgeranyl diphosphate (GGPP) synthase catalyzes the first step in pleuromutilin biosynthesis (PubMed:27143514, PubMed:29388775). GGPP is then substrate of the premutilin synthase (PS) to yield premutilin (PubMed:29388775). Premutilin synthase is a bifunctional enzyme composed of the fusion of a class II diterpene cyclase (DTC) and a class I diterpene synthase (DTS), with the corresponding domains and active sites containing characteristic aspartate-rich motifs. GGPP is first converted to mutildienyl-diphosphate (MPP) at the class II DTC site (PubMed:29388775). MPP is subsequently further cyclized at the class I DTS site, followed by a 1,5-hydride shift and addition of water prior to terminating deprotonation, to yield premutilin (PubMed:29388775). In addition to the aforementioned GGPP synthase and bifunctional diterpene synthase, the cluster also contains three cytochrome P450 monooxygenases, a short-chain alcohol dehydrogenase, and an acyltransferase, involved in the conversion of premutilin to pleuromutilin (PubMed:27143514, PubMed:29388775). The cytochrome P450 monooxygenases P450-1 and P450-2 hydroxylate premutilin at C-11 and C-3, respectively, producing 11-hydroxypremutilin and 3-hydroxypremutilin (By similarity). The combination of the actions of both ple5 and ple6 leads to the production of 3,11-dihydroxypremutilin (By similarity). The short chain dehydrogenase SDR further converts 3,11-dihydroxypremutilin into mutilin (By similarity). The acetyltransferase ATF then acetylates mutilin to produce 14-O-acetylmutilin (By similarity). Finally, the cytochrome P450 monooxygenase P450-3 catalyzes hydroxylation on the alpha position of the acetyl side chain of 14-O-acetylmutilin to yield pleuromutilin (By similarity).</text>
</comment>
<comment type="catalytic activity">
    <reaction evidence="2">
        <text>isopentenyl diphosphate + dimethylallyl diphosphate = (2E)-geranyl diphosphate + diphosphate</text>
        <dbReference type="Rhea" id="RHEA:22408"/>
        <dbReference type="ChEBI" id="CHEBI:33019"/>
        <dbReference type="ChEBI" id="CHEBI:57623"/>
        <dbReference type="ChEBI" id="CHEBI:58057"/>
        <dbReference type="ChEBI" id="CHEBI:128769"/>
        <dbReference type="EC" id="2.5.1.1"/>
    </reaction>
</comment>
<comment type="catalytic activity">
    <reaction evidence="2">
        <text>isopentenyl diphosphate + (2E)-geranyl diphosphate = (2E,6E)-farnesyl diphosphate + diphosphate</text>
        <dbReference type="Rhea" id="RHEA:19361"/>
        <dbReference type="ChEBI" id="CHEBI:33019"/>
        <dbReference type="ChEBI" id="CHEBI:58057"/>
        <dbReference type="ChEBI" id="CHEBI:128769"/>
        <dbReference type="ChEBI" id="CHEBI:175763"/>
        <dbReference type="EC" id="2.5.1.10"/>
    </reaction>
</comment>
<comment type="catalytic activity">
    <reaction evidence="2">
        <text>isopentenyl diphosphate + (2E,6E)-farnesyl diphosphate = (2E,6E,10E)-geranylgeranyl diphosphate + diphosphate</text>
        <dbReference type="Rhea" id="RHEA:17653"/>
        <dbReference type="ChEBI" id="CHEBI:33019"/>
        <dbReference type="ChEBI" id="CHEBI:58756"/>
        <dbReference type="ChEBI" id="CHEBI:128769"/>
        <dbReference type="ChEBI" id="CHEBI:175763"/>
        <dbReference type="EC" id="2.5.1.29"/>
    </reaction>
</comment>
<comment type="cofactor">
    <cofactor evidence="2">
        <name>Mg(2+)</name>
        <dbReference type="ChEBI" id="CHEBI:18420"/>
    </cofactor>
    <text evidence="2">Binds 2 Mg(2+) ions per subunit.</text>
</comment>
<comment type="pathway">
    <text evidence="3 4">Secondary metabolite biosynthesis; terpenoid biosynthesis.</text>
</comment>
<comment type="induction">
    <text evidence="3">Expression is up-regulated during pleuromutilin production.</text>
</comment>
<comment type="similarity">
    <text evidence="6">Belongs to the FPP/GGPP synthase family.</text>
</comment>
<protein>
    <recommendedName>
        <fullName evidence="5">Geranylgeranyl pyrophosphate synthase</fullName>
        <shortName evidence="2">GGPP synthase</shortName>
        <shortName evidence="2">GGPPSase</shortName>
        <shortName evidence="5">GGS</shortName>
        <ecNumber evidence="2">2.5.1.-</ecNumber>
    </recommendedName>
    <alternativeName>
        <fullName evidence="2">(2E,6E)-farnesyl diphosphate synthase</fullName>
    </alternativeName>
    <alternativeName>
        <fullName evidence="2">Dimethylallyltranstransferase</fullName>
        <ecNumber evidence="2">2.5.1.1</ecNumber>
    </alternativeName>
    <alternativeName>
        <fullName evidence="2">Farnesyl diphosphate synthase</fullName>
    </alternativeName>
    <alternativeName>
        <fullName evidence="2">Farnesyltranstransferase</fullName>
        <ecNumber evidence="2">2.5.1.29</ecNumber>
    </alternativeName>
    <alternativeName>
        <fullName evidence="2">Geranylgeranyl diphosphate synthase</fullName>
    </alternativeName>
    <alternativeName>
        <fullName evidence="2">Geranyltranstransferase</fullName>
        <ecNumber evidence="2">2.5.1.10</ecNumber>
    </alternativeName>
    <alternativeName>
        <fullName evidence="5">Pleuromutilin biosynthetic cluster protein synthesis protein G</fullName>
    </alternativeName>
</protein>
<evidence type="ECO:0000250" key="1">
    <source>
        <dbReference type="UniProtKB" id="A0A6S6QJ62"/>
    </source>
</evidence>
<evidence type="ECO:0000250" key="2">
    <source>
        <dbReference type="UniProtKB" id="Q12051"/>
    </source>
</evidence>
<evidence type="ECO:0000269" key="3">
    <source>
    </source>
</evidence>
<evidence type="ECO:0000269" key="4">
    <source>
    </source>
</evidence>
<evidence type="ECO:0000303" key="5">
    <source>
    </source>
</evidence>
<evidence type="ECO:0000305" key="6"/>
<organism>
    <name type="scientific">Clitopilus passeckerianus</name>
    <name type="common">Pleurotus passeckerianus</name>
    <dbReference type="NCBI Taxonomy" id="648682"/>
    <lineage>
        <taxon>Eukaryota</taxon>
        <taxon>Fungi</taxon>
        <taxon>Dikarya</taxon>
        <taxon>Basidiomycota</taxon>
        <taxon>Agaricomycotina</taxon>
        <taxon>Agaricomycetes</taxon>
        <taxon>Agaricomycetidae</taxon>
        <taxon>Agaricales</taxon>
        <taxon>Tricholomatineae</taxon>
        <taxon>Entolomataceae</taxon>
        <taxon>Clitopilus</taxon>
    </lineage>
</organism>
<sequence>MRIPNVFLSYLRQVAVDGTLSSCSGVKSRKPVIAYGFDDSQDSLVDENDEKILEPFGYYRHLLKGKSARTVLMHCFNAFLGLPEDWVIGVTKAIEDLHNASLLIDDIEDESALRRGSPAAHMKYGIALTMNAGNLVYFTVLQDVYDLGMKTGGTQVANAMARIYTEEMIELHRGQGIEIWWRDQRSPPSVDQYIHMLEQKTGGLLRLGVRLLQCHPGVNNRADLSDIALRIGVYYQLRDDYINLMSTSYHDERGFAEDMTEGKYTFPMLHSLKRSPDSGLREILDLKPADIALKKKAIAIMQDTGSLVATRNLLGAVKNDLSGLVAEQRGDDYAMSAGLERFLEKLYIAE</sequence>
<feature type="chain" id="PRO_0000445370" description="Geranylgeranyl pyrophosphate synthase">
    <location>
        <begin position="1"/>
        <end position="350"/>
    </location>
</feature>
<feature type="binding site" evidence="2">
    <location>
        <position position="66"/>
    </location>
    <ligand>
        <name>isopentenyl diphosphate</name>
        <dbReference type="ChEBI" id="CHEBI:128769"/>
    </ligand>
</feature>
<feature type="binding site" evidence="2">
    <location>
        <position position="69"/>
    </location>
    <ligand>
        <name>isopentenyl diphosphate</name>
        <dbReference type="ChEBI" id="CHEBI:128769"/>
    </ligand>
</feature>
<feature type="binding site" evidence="2">
    <location>
        <position position="98"/>
    </location>
    <ligand>
        <name>isopentenyl diphosphate</name>
        <dbReference type="ChEBI" id="CHEBI:128769"/>
    </ligand>
</feature>
<feature type="binding site" evidence="2">
    <location>
        <position position="105"/>
    </location>
    <ligand>
        <name>Mg(2+)</name>
        <dbReference type="ChEBI" id="CHEBI:18420"/>
        <label>1</label>
    </ligand>
</feature>
<feature type="binding site" evidence="2">
    <location>
        <position position="105"/>
    </location>
    <ligand>
        <name>Mg(2+)</name>
        <dbReference type="ChEBI" id="CHEBI:18420"/>
        <label>2</label>
    </ligand>
</feature>
<feature type="binding site" evidence="2">
    <location>
        <position position="109"/>
    </location>
    <ligand>
        <name>Mg(2+)</name>
        <dbReference type="ChEBI" id="CHEBI:18420"/>
        <label>1</label>
    </ligand>
</feature>
<feature type="binding site" evidence="2">
    <location>
        <position position="109"/>
    </location>
    <ligand>
        <name>Mg(2+)</name>
        <dbReference type="ChEBI" id="CHEBI:18420"/>
        <label>2</label>
    </ligand>
</feature>
<feature type="binding site" evidence="2">
    <location>
        <position position="114"/>
    </location>
    <ligand>
        <name>dimethylallyl diphosphate</name>
        <dbReference type="ChEBI" id="CHEBI:57623"/>
    </ligand>
</feature>
<feature type="binding site" evidence="2">
    <location>
        <position position="115"/>
    </location>
    <ligand>
        <name>isopentenyl diphosphate</name>
        <dbReference type="ChEBI" id="CHEBI:128769"/>
    </ligand>
</feature>
<feature type="binding site" evidence="2">
    <location>
        <position position="200"/>
    </location>
    <ligand>
        <name>dimethylallyl diphosphate</name>
        <dbReference type="ChEBI" id="CHEBI:57623"/>
    </ligand>
</feature>
<feature type="binding site" evidence="2">
    <location>
        <position position="201"/>
    </location>
    <ligand>
        <name>dimethylallyl diphosphate</name>
        <dbReference type="ChEBI" id="CHEBI:57623"/>
    </ligand>
</feature>
<feature type="binding site" evidence="2">
    <location>
        <position position="236"/>
    </location>
    <ligand>
        <name>dimethylallyl diphosphate</name>
        <dbReference type="ChEBI" id="CHEBI:57623"/>
    </ligand>
</feature>
<feature type="binding site" evidence="2">
    <location>
        <position position="243"/>
    </location>
    <ligand>
        <name>dimethylallyl diphosphate</name>
        <dbReference type="ChEBI" id="CHEBI:57623"/>
    </ligand>
</feature>
<feature type="binding site" evidence="2">
    <location>
        <position position="263"/>
    </location>
    <ligand>
        <name>dimethylallyl diphosphate</name>
        <dbReference type="ChEBI" id="CHEBI:57623"/>
    </ligand>
</feature>
<feature type="site" description="Important for determining product chain length" evidence="2">
    <location>
        <position position="137"/>
    </location>
</feature>
<keyword id="KW-0045">Antibiotic biosynthesis</keyword>
<keyword id="KW-0414">Isoprene biosynthesis</keyword>
<keyword id="KW-0460">Magnesium</keyword>
<keyword id="KW-0479">Metal-binding</keyword>
<keyword id="KW-0808">Transferase</keyword>
<name>PLE4_CLIPA</name>